<organism>
    <name type="scientific">Ovis aries</name>
    <name type="common">Sheep</name>
    <dbReference type="NCBI Taxonomy" id="9940"/>
    <lineage>
        <taxon>Eukaryota</taxon>
        <taxon>Metazoa</taxon>
        <taxon>Chordata</taxon>
        <taxon>Craniata</taxon>
        <taxon>Vertebrata</taxon>
        <taxon>Euteleostomi</taxon>
        <taxon>Mammalia</taxon>
        <taxon>Eutheria</taxon>
        <taxon>Laurasiatheria</taxon>
        <taxon>Artiodactyla</taxon>
        <taxon>Ruminantia</taxon>
        <taxon>Pecora</taxon>
        <taxon>Bovidae</taxon>
        <taxon>Caprinae</taxon>
        <taxon>Ovis</taxon>
    </lineage>
</organism>
<keyword id="KW-0968">Cytoplasmic vesicle</keyword>
<keyword id="KW-1015">Disulfide bond</keyword>
<keyword id="KW-0325">Glycoprotein</keyword>
<keyword id="KW-0391">Immunity</keyword>
<keyword id="KW-0395">Inflammatory response</keyword>
<keyword id="KW-0399">Innate immunity</keyword>
<keyword id="KW-1017">Isopeptide bond</keyword>
<keyword id="KW-0433">Leucine-rich repeat</keyword>
<keyword id="KW-0472">Membrane</keyword>
<keyword id="KW-0520">NAD</keyword>
<keyword id="KW-0675">Receptor</keyword>
<keyword id="KW-1185">Reference proteome</keyword>
<keyword id="KW-0677">Repeat</keyword>
<keyword id="KW-0732">Signal</keyword>
<keyword id="KW-0812">Transmembrane</keyword>
<keyword id="KW-1133">Transmembrane helix</keyword>
<keyword id="KW-0832">Ubl conjugation</keyword>
<dbReference type="EMBL" id="EU580543">
    <property type="protein sequence ID" value="ACB72732.1"/>
    <property type="molecule type" value="Genomic_DNA"/>
</dbReference>
<dbReference type="EMBL" id="AM981300">
    <property type="protein sequence ID" value="CAQ37821.1"/>
    <property type="molecule type" value="mRNA"/>
</dbReference>
<dbReference type="SMR" id="B2LT65"/>
<dbReference type="STRING" id="9940.ENSOARP00000016139"/>
<dbReference type="GlyCosmos" id="B2LT65">
    <property type="glycosylation" value="4 sites, No reported glycans"/>
</dbReference>
<dbReference type="PaxDb" id="9940-ENSOARP00000016139"/>
<dbReference type="eggNOG" id="KOG4641">
    <property type="taxonomic scope" value="Eukaryota"/>
</dbReference>
<dbReference type="Proteomes" id="UP000002356">
    <property type="component" value="Unplaced"/>
</dbReference>
<dbReference type="GO" id="GO:0005794">
    <property type="term" value="C:Golgi apparatus"/>
    <property type="evidence" value="ECO:0000250"/>
    <property type="project" value="UniProtKB"/>
</dbReference>
<dbReference type="GO" id="GO:0045121">
    <property type="term" value="C:membrane raft"/>
    <property type="evidence" value="ECO:0000250"/>
    <property type="project" value="UniProtKB"/>
</dbReference>
<dbReference type="GO" id="GO:0030670">
    <property type="term" value="C:phagocytic vesicle membrane"/>
    <property type="evidence" value="ECO:0007669"/>
    <property type="project" value="UniProtKB-SubCell"/>
</dbReference>
<dbReference type="GO" id="GO:0005886">
    <property type="term" value="C:plasma membrane"/>
    <property type="evidence" value="ECO:0007669"/>
    <property type="project" value="TreeGrafter"/>
</dbReference>
<dbReference type="GO" id="GO:0043235">
    <property type="term" value="C:receptor complex"/>
    <property type="evidence" value="ECO:0007669"/>
    <property type="project" value="TreeGrafter"/>
</dbReference>
<dbReference type="GO" id="GO:0061809">
    <property type="term" value="F:NAD+ nucleosidase activity, cyclic ADP-ribose generating"/>
    <property type="evidence" value="ECO:0007669"/>
    <property type="project" value="UniProtKB-EC"/>
</dbReference>
<dbReference type="GO" id="GO:0004888">
    <property type="term" value="F:transmembrane signaling receptor activity"/>
    <property type="evidence" value="ECO:0007669"/>
    <property type="project" value="InterPro"/>
</dbReference>
<dbReference type="GO" id="GO:0042497">
    <property type="term" value="F:triacyl lipopeptide binding"/>
    <property type="evidence" value="ECO:0007669"/>
    <property type="project" value="TreeGrafter"/>
</dbReference>
<dbReference type="GO" id="GO:0071726">
    <property type="term" value="P:cellular response to diacyl bacterial lipopeptide"/>
    <property type="evidence" value="ECO:0000250"/>
    <property type="project" value="UniProtKB"/>
</dbReference>
<dbReference type="GO" id="GO:0071727">
    <property type="term" value="P:cellular response to triacyl bacterial lipopeptide"/>
    <property type="evidence" value="ECO:0000250"/>
    <property type="project" value="UniProtKB"/>
</dbReference>
<dbReference type="GO" id="GO:0006954">
    <property type="term" value="P:inflammatory response"/>
    <property type="evidence" value="ECO:0007669"/>
    <property type="project" value="UniProtKB-KW"/>
</dbReference>
<dbReference type="GO" id="GO:0045087">
    <property type="term" value="P:innate immune response"/>
    <property type="evidence" value="ECO:0007669"/>
    <property type="project" value="UniProtKB-KW"/>
</dbReference>
<dbReference type="GO" id="GO:0002224">
    <property type="term" value="P:toll-like receptor signaling pathway"/>
    <property type="evidence" value="ECO:0007669"/>
    <property type="project" value="InterPro"/>
</dbReference>
<dbReference type="FunFam" id="3.40.50.10140:FF:000001">
    <property type="entry name" value="Toll-like receptor 2"/>
    <property type="match status" value="1"/>
</dbReference>
<dbReference type="FunFam" id="3.80.10.10:FF:000046">
    <property type="entry name" value="Toll-like receptor 2"/>
    <property type="match status" value="1"/>
</dbReference>
<dbReference type="Gene3D" id="3.80.10.10">
    <property type="entry name" value="Ribonuclease Inhibitor"/>
    <property type="match status" value="1"/>
</dbReference>
<dbReference type="Gene3D" id="3.40.50.10140">
    <property type="entry name" value="Toll/interleukin-1 receptor homology (TIR) domain"/>
    <property type="match status" value="1"/>
</dbReference>
<dbReference type="InterPro" id="IPR000483">
    <property type="entry name" value="Cys-rich_flank_reg_C"/>
</dbReference>
<dbReference type="InterPro" id="IPR001611">
    <property type="entry name" value="Leu-rich_rpt"/>
</dbReference>
<dbReference type="InterPro" id="IPR003591">
    <property type="entry name" value="Leu-rich_rpt_typical-subtyp"/>
</dbReference>
<dbReference type="InterPro" id="IPR032675">
    <property type="entry name" value="LRR_dom_sf"/>
</dbReference>
<dbReference type="InterPro" id="IPR000157">
    <property type="entry name" value="TIR_dom"/>
</dbReference>
<dbReference type="InterPro" id="IPR017241">
    <property type="entry name" value="Toll-like_receptor"/>
</dbReference>
<dbReference type="InterPro" id="IPR035897">
    <property type="entry name" value="Toll_tir_struct_dom_sf"/>
</dbReference>
<dbReference type="PANTHER" id="PTHR24365">
    <property type="entry name" value="TOLL-LIKE RECEPTOR"/>
    <property type="match status" value="1"/>
</dbReference>
<dbReference type="PANTHER" id="PTHR24365:SF17">
    <property type="entry name" value="TOLL-LIKE RECEPTOR 2"/>
    <property type="match status" value="1"/>
</dbReference>
<dbReference type="Pfam" id="PF13855">
    <property type="entry name" value="LRR_8"/>
    <property type="match status" value="2"/>
</dbReference>
<dbReference type="Pfam" id="PF01582">
    <property type="entry name" value="TIR"/>
    <property type="match status" value="1"/>
</dbReference>
<dbReference type="PIRSF" id="PIRSF037595">
    <property type="entry name" value="Toll-like_receptor"/>
    <property type="match status" value="1"/>
</dbReference>
<dbReference type="PRINTS" id="PR01537">
    <property type="entry name" value="INTRLKN1R1F"/>
</dbReference>
<dbReference type="PRINTS" id="PR00019">
    <property type="entry name" value="LEURICHRPT"/>
</dbReference>
<dbReference type="SMART" id="SM00364">
    <property type="entry name" value="LRR_BAC"/>
    <property type="match status" value="5"/>
</dbReference>
<dbReference type="SMART" id="SM00365">
    <property type="entry name" value="LRR_SD22"/>
    <property type="match status" value="6"/>
</dbReference>
<dbReference type="SMART" id="SM00369">
    <property type="entry name" value="LRR_TYP"/>
    <property type="match status" value="6"/>
</dbReference>
<dbReference type="SMART" id="SM00082">
    <property type="entry name" value="LRRCT"/>
    <property type="match status" value="1"/>
</dbReference>
<dbReference type="SMART" id="SM00255">
    <property type="entry name" value="TIR"/>
    <property type="match status" value="1"/>
</dbReference>
<dbReference type="SUPFAM" id="SSF52058">
    <property type="entry name" value="L domain-like"/>
    <property type="match status" value="2"/>
</dbReference>
<dbReference type="SUPFAM" id="SSF52200">
    <property type="entry name" value="Toll/Interleukin receptor TIR domain"/>
    <property type="match status" value="1"/>
</dbReference>
<dbReference type="PROSITE" id="PS51450">
    <property type="entry name" value="LRR"/>
    <property type="match status" value="10"/>
</dbReference>
<dbReference type="PROSITE" id="PS50104">
    <property type="entry name" value="TIR"/>
    <property type="match status" value="1"/>
</dbReference>
<sequence>MPRALWTAWVWAVISVFTEGASDQASSLSCDPTGVCDGHSRSLNSIPSGLTASVKSLDLSDNEITYVGNRDLQRCVNLKTLRLGANEIHTVEEDSFFHLRNLEYLDLSYNRLSNLSSSWFRSLYVLKFLNLLGNLYKTLGETSLFSHLPNLRTLKVGNSNSFTQIHEKDFTGLTFLEELEISAQNLQLYVPKSLKSIQNISHLILHLRQPVLLLDILIDIVSSLDYLELRDTNLHTFYFSEASISEINTSVKKLTFRNVQFTDDSFVEVVKLFNYVSGILEVEFDDCTHDGVGDFTALTLNRIRYLGNVETLTIRKLHIPQFFLFYDLSSIYPLTGKVKRVTIENSKVFLVPCLLSQHLKSLEYLDLSENLMSEETLKNSACEHAWPVLQTLVLRQNRLKSLEKTGELLLTLKNLNNLDISKNNFLSMPETCQWPGKMKQLNLSSTRIHSLTQCLPQTLEILDVSNNNLDSFSLILPQLKELYISRNKLKTLPDASFLPVLSVMRISGNIINTFSKEQLDSFPQLKALEAGGNNFICSCDFLSFAQGQQALARVLVDWPDGYRCDAPSHVRGQRVQDARLSLSECHRAAVVSAVCCALFLLLLLTGVLCHRFHGLWYMKMMWAWLQAKRKPRKAPRRDLCYDAFVSYSERDSYWVENLMVQELEHFNPPFKLCLHKRDFVPGKWIIDNIIDSIEKSRKTIFVLSESFVRSEWCKYELDFSHFRLFDENNDAAILILLEPIDKKAVPQRFCKLRKIMNTRTYLEWPTDETHREAFWLNLRAAIRS</sequence>
<name>TLR2_SHEEP</name>
<gene>
    <name type="primary">TLR2</name>
</gene>
<feature type="signal peptide" evidence="5">
    <location>
        <begin position="1"/>
        <end position="20"/>
    </location>
</feature>
<feature type="chain" id="PRO_0000363771" description="Toll-like receptor 2">
    <location>
        <begin position="21"/>
        <end position="784"/>
    </location>
</feature>
<feature type="topological domain" description="Extracellular" evidence="5">
    <location>
        <begin position="21"/>
        <end position="587"/>
    </location>
</feature>
<feature type="transmembrane region" description="Helical" evidence="5">
    <location>
        <begin position="588"/>
        <end position="608"/>
    </location>
</feature>
<feature type="topological domain" description="Cytoplasmic" evidence="5">
    <location>
        <begin position="609"/>
        <end position="784"/>
    </location>
</feature>
<feature type="repeat" description="LRR 1">
    <location>
        <begin position="54"/>
        <end position="77"/>
    </location>
</feature>
<feature type="repeat" description="LRR 2">
    <location>
        <begin position="78"/>
        <end position="101"/>
    </location>
</feature>
<feature type="repeat" description="LRR 3">
    <location>
        <begin position="102"/>
        <end position="125"/>
    </location>
</feature>
<feature type="repeat" description="LRR 4">
    <location>
        <begin position="126"/>
        <end position="150"/>
    </location>
</feature>
<feature type="repeat" description="LRR 5">
    <location>
        <begin position="151"/>
        <end position="175"/>
    </location>
</feature>
<feature type="repeat" description="LRR 6">
    <location>
        <begin position="176"/>
        <end position="199"/>
    </location>
</feature>
<feature type="repeat" description="LRR 7">
    <location>
        <begin position="200"/>
        <end position="223"/>
    </location>
</feature>
<feature type="repeat" description="LRR 8">
    <location>
        <begin position="224"/>
        <end position="250"/>
    </location>
</feature>
<feature type="repeat" description="LRR 9">
    <location>
        <begin position="251"/>
        <end position="278"/>
    </location>
</feature>
<feature type="repeat" description="LRR 10">
    <location>
        <begin position="279"/>
        <end position="308"/>
    </location>
</feature>
<feature type="repeat" description="LRR 11">
    <location>
        <begin position="309"/>
        <end position="337"/>
    </location>
</feature>
<feature type="repeat" description="LRR 12">
    <location>
        <begin position="338"/>
        <end position="361"/>
    </location>
</feature>
<feature type="repeat" description="LRR 13">
    <location>
        <begin position="362"/>
        <end position="388"/>
    </location>
</feature>
<feature type="repeat" description="LRR 14">
    <location>
        <begin position="389"/>
        <end position="414"/>
    </location>
</feature>
<feature type="repeat" description="LRR 15">
    <location>
        <begin position="415"/>
        <end position="437"/>
    </location>
</feature>
<feature type="repeat" description="LRR 16">
    <location>
        <begin position="438"/>
        <end position="457"/>
    </location>
</feature>
<feature type="repeat" description="LRR 17">
    <location>
        <begin position="458"/>
        <end position="478"/>
    </location>
</feature>
<feature type="repeat" description="LRR 18">
    <location>
        <begin position="479"/>
        <end position="500"/>
    </location>
</feature>
<feature type="repeat" description="LRR 19">
    <location>
        <begin position="501"/>
        <end position="524"/>
    </location>
</feature>
<feature type="domain" description="LRRCT">
    <location>
        <begin position="525"/>
        <end position="579"/>
    </location>
</feature>
<feature type="domain" description="TIR" evidence="6">
    <location>
        <begin position="639"/>
        <end position="782"/>
    </location>
</feature>
<feature type="short sequence motif" description="ATG16L1-binding motif">
    <location>
        <begin position="761"/>
        <end position="778"/>
    </location>
</feature>
<feature type="site" description="Interaction with bacterial lipopeptide" evidence="1">
    <location>
        <position position="349"/>
    </location>
</feature>
<feature type="glycosylation site" description="N-linked (GlcNAc...) asparagine" evidence="5">
    <location>
        <position position="114"/>
    </location>
</feature>
<feature type="glycosylation site" description="N-linked (GlcNAc...) asparagine" evidence="5">
    <location>
        <position position="199"/>
    </location>
</feature>
<feature type="glycosylation site" description="N-linked (GlcNAc...) asparagine" evidence="5">
    <location>
        <position position="248"/>
    </location>
</feature>
<feature type="glycosylation site" description="N-linked (GlcNAc...) asparagine" evidence="5">
    <location>
        <position position="442"/>
    </location>
</feature>
<feature type="disulfide bond" evidence="1">
    <location>
        <begin position="30"/>
        <end position="36"/>
    </location>
</feature>
<feature type="disulfide bond" evidence="1">
    <location>
        <begin position="353"/>
        <end position="382"/>
    </location>
</feature>
<feature type="disulfide bond" evidence="1">
    <location>
        <begin position="432"/>
        <end position="454"/>
    </location>
</feature>
<feature type="cross-link" description="Glycyl lysine isopeptide (Lys-Gly) (interchain with G-Cter in ubiquitin)" evidence="3">
    <location>
        <position position="754"/>
    </location>
</feature>
<feature type="sequence conflict" description="In Ref. 2; CAQ37821." evidence="7" ref="2">
    <original>G</original>
    <variation>E</variation>
    <location>
        <position position="140"/>
    </location>
</feature>
<feature type="sequence conflict" description="In Ref. 2; CAQ37821." evidence="7" ref="2">
    <original>HR</original>
    <variation>QQ</variation>
    <location>
        <begin position="770"/>
        <end position="771"/>
    </location>
</feature>
<comment type="function">
    <text evidence="3 4">Cooperates with LY96 to mediate the innate immune response to bacterial lipoproteins and other microbial cell wall components. Cooperates with TLR1 or TLR6 to mediate the innate immune response to bacterial lipoproteins or lipopeptides. Acts via MYD88 and TRAF6, leading to NF-kappa-B activation, cytokine secretion and the inflammatory response (By similarity). May also promote apoptosis in response to lipoproteins. Forms activation clusters composed of several receptors depending on the ligand, these clusters trigger signaling from the cell surface and subsequently are targeted to the Golgi in a lipid-raft dependent pathway. Forms the cluster TLR2:TLR6:CD14:CD36 in response to diacylated lipopeptides and TLR2:TLR1:CD14 in response to triacylated lipopeptides (By similarity).</text>
</comment>
<comment type="subunit">
    <text evidence="3 4">Interacts with LY96, TLR1 and TLR6 (via extracellular domain). TLR2 seems to exist in heterodimers with either TLR1 or TLR6 before stimulation by the ligand. The heterodimers form bigger oligomers in response to their corresponding ligands as well as further heterotypic associations with other receptors such as CD14 and/or CD36. Binds MYD88 (via TIR domain). Interacts with TICAM1. Interacts with CNPY3. Interacts with ATG16L1. Interacts with PPP1R11. Interacts with TICAM2. Interacts with TIRAP (By similarity).</text>
</comment>
<comment type="subcellular location">
    <subcellularLocation>
        <location evidence="4">Membrane</location>
        <topology evidence="5">Single-pass type I membrane protein</topology>
    </subcellularLocation>
    <subcellularLocation>
        <location evidence="4">Cytoplasmic vesicle</location>
        <location evidence="4">Phagosome membrane</location>
        <topology evidence="5">Single-pass type I membrane protein</topology>
    </subcellularLocation>
    <subcellularLocation>
        <location evidence="3">Membrane raft</location>
    </subcellularLocation>
    <text evidence="3">Does not reside in lipid rafts before stimulation but accumulates increasingly in the raft upon the presence of the microbial ligand. In response to diacylated lipoproteins, TLR2:TLR6 heterodimers are recruited in lipid rafts, this recruitment determine the intracellular targeting to the Golgi apparatus. Triacylated lipoproteins induce the same mechanism for TLR2:TLR1 heterodimers.</text>
</comment>
<comment type="domain">
    <text evidence="1">Ester-bound lipid substrates are bound through a crevice formed between the LRR 11 and LRR 12.</text>
</comment>
<comment type="domain">
    <text evidence="1">The ATG16L1-binding motif mediates interaction with ATG16L1.</text>
</comment>
<comment type="PTM">
    <text evidence="4">Ubiquitinated at Lys-754 by PPP1R11, leading to its degradation. Deubiquitinated by USP2.</text>
</comment>
<comment type="PTM">
    <text evidence="3">Glycosylation of Asn-442 is critical for secretion of the N-terminal ectodomain of TLR2.</text>
</comment>
<comment type="similarity">
    <text evidence="7">Belongs to the Toll-like receptor family.</text>
</comment>
<comment type="caution">
    <text evidence="2 7">In some plant proteins and in human SARM1, the TIR domain has NAD(+) hydrolase (NADase) activity (By similarity). However, despite the presence of the catalytic Asp residue, the isolated TIR domain of human TLR4 lacks NADase activity (By similarity). Based on this, it is unlikely that Toll-like receptors have NADase activity.</text>
</comment>
<evidence type="ECO:0000250" key="1"/>
<evidence type="ECO:0000250" key="2">
    <source>
        <dbReference type="UniProtKB" id="O00206"/>
    </source>
</evidence>
<evidence type="ECO:0000250" key="3">
    <source>
        <dbReference type="UniProtKB" id="O60603"/>
    </source>
</evidence>
<evidence type="ECO:0000250" key="4">
    <source>
        <dbReference type="UniProtKB" id="Q9QUN7"/>
    </source>
</evidence>
<evidence type="ECO:0000255" key="5"/>
<evidence type="ECO:0000255" key="6">
    <source>
        <dbReference type="PROSITE-ProRule" id="PRU00204"/>
    </source>
</evidence>
<evidence type="ECO:0000305" key="7"/>
<protein>
    <recommendedName>
        <fullName>Toll-like receptor 2</fullName>
    </recommendedName>
    <cdAntigenName>CD282</cdAntigenName>
</protein>
<proteinExistence type="evidence at transcript level"/>
<accession>B2LT65</accession>
<accession>B5DC87</accession>
<reference key="1">
    <citation type="journal article" date="2008" name="BMC Evol. Biol.">
        <title>Molecular evolution of bovine Toll-like receptor 2 suggests substitutions of functional relevance.</title>
        <authorList>
            <person name="Jann O.C."/>
            <person name="Werling D."/>
            <person name="Chang J.S."/>
            <person name="Haig D."/>
            <person name="Glass E.J."/>
        </authorList>
    </citation>
    <scope>NUCLEOTIDE SEQUENCE [GENOMIC DNA]</scope>
</reference>
<reference key="2">
    <citation type="journal article" date="2009" name="Vet. Immunol. Immunopathol.">
        <title>Molecular cloning and characterization of Toll-like receptors 1-10 in sheep.</title>
        <authorList>
            <person name="Chang J.S."/>
            <person name="Russell G.C."/>
            <person name="Jann O."/>
            <person name="Glass E.J."/>
            <person name="Werling D."/>
            <person name="Haig D.M."/>
        </authorList>
    </citation>
    <scope>NUCLEOTIDE SEQUENCE [MRNA]</scope>
    <source>
        <tissue>Peripheral blood</tissue>
    </source>
</reference>